<keyword id="KW-1185">Reference proteome</keyword>
<keyword id="KW-0687">Ribonucleoprotein</keyword>
<keyword id="KW-0689">Ribosomal protein</keyword>
<proteinExistence type="inferred from homology"/>
<name>RS10_MYXXD</name>
<comment type="function">
    <text evidence="1">Involved in the binding of tRNA to the ribosomes.</text>
</comment>
<comment type="subunit">
    <text evidence="1">Part of the 30S ribosomal subunit.</text>
</comment>
<comment type="similarity">
    <text evidence="1">Belongs to the universal ribosomal protein uS10 family.</text>
</comment>
<sequence>MATQKIRIRLKAYDSKLLDQSAGEIVETAKRTGAKVAGPIPLPTRINKFTVLRSPHVDKKSREQFEIRTHKRLLDILEPTQQTLDALMKLDLSAGVDVEIKS</sequence>
<accession>Q1D775</accession>
<protein>
    <recommendedName>
        <fullName evidence="1">Small ribosomal subunit protein uS10</fullName>
    </recommendedName>
    <alternativeName>
        <fullName evidence="2">30S ribosomal protein S10</fullName>
    </alternativeName>
</protein>
<feature type="chain" id="PRO_0000258558" description="Small ribosomal subunit protein uS10">
    <location>
        <begin position="1"/>
        <end position="102"/>
    </location>
</feature>
<evidence type="ECO:0000255" key="1">
    <source>
        <dbReference type="HAMAP-Rule" id="MF_00508"/>
    </source>
</evidence>
<evidence type="ECO:0000305" key="2"/>
<dbReference type="EMBL" id="CP000113">
    <property type="protein sequence ID" value="ABF92361.1"/>
    <property type="molecule type" value="Genomic_DNA"/>
</dbReference>
<dbReference type="RefSeq" id="WP_002633608.1">
    <property type="nucleotide sequence ID" value="NC_008095.1"/>
</dbReference>
<dbReference type="SMR" id="Q1D775"/>
<dbReference type="STRING" id="246197.MXAN_3299"/>
<dbReference type="EnsemblBacteria" id="ABF92361">
    <property type="protein sequence ID" value="ABF92361"/>
    <property type="gene ID" value="MXAN_3299"/>
</dbReference>
<dbReference type="GeneID" id="64082945"/>
<dbReference type="KEGG" id="mxa:MXAN_3299"/>
<dbReference type="eggNOG" id="COG0051">
    <property type="taxonomic scope" value="Bacteria"/>
</dbReference>
<dbReference type="HOGENOM" id="CLU_122625_1_3_7"/>
<dbReference type="OrthoDB" id="9804464at2"/>
<dbReference type="Proteomes" id="UP000002402">
    <property type="component" value="Chromosome"/>
</dbReference>
<dbReference type="GO" id="GO:1990904">
    <property type="term" value="C:ribonucleoprotein complex"/>
    <property type="evidence" value="ECO:0007669"/>
    <property type="project" value="UniProtKB-KW"/>
</dbReference>
<dbReference type="GO" id="GO:0005840">
    <property type="term" value="C:ribosome"/>
    <property type="evidence" value="ECO:0007669"/>
    <property type="project" value="UniProtKB-KW"/>
</dbReference>
<dbReference type="GO" id="GO:0003735">
    <property type="term" value="F:structural constituent of ribosome"/>
    <property type="evidence" value="ECO:0007669"/>
    <property type="project" value="InterPro"/>
</dbReference>
<dbReference type="GO" id="GO:0000049">
    <property type="term" value="F:tRNA binding"/>
    <property type="evidence" value="ECO:0007669"/>
    <property type="project" value="UniProtKB-UniRule"/>
</dbReference>
<dbReference type="GO" id="GO:0006412">
    <property type="term" value="P:translation"/>
    <property type="evidence" value="ECO:0007669"/>
    <property type="project" value="UniProtKB-UniRule"/>
</dbReference>
<dbReference type="FunFam" id="3.30.70.600:FF:000001">
    <property type="entry name" value="30S ribosomal protein S10"/>
    <property type="match status" value="1"/>
</dbReference>
<dbReference type="Gene3D" id="3.30.70.600">
    <property type="entry name" value="Ribosomal protein S10 domain"/>
    <property type="match status" value="1"/>
</dbReference>
<dbReference type="HAMAP" id="MF_00508">
    <property type="entry name" value="Ribosomal_uS10"/>
    <property type="match status" value="1"/>
</dbReference>
<dbReference type="InterPro" id="IPR001848">
    <property type="entry name" value="Ribosomal_uS10"/>
</dbReference>
<dbReference type="InterPro" id="IPR018268">
    <property type="entry name" value="Ribosomal_uS10_CS"/>
</dbReference>
<dbReference type="InterPro" id="IPR027486">
    <property type="entry name" value="Ribosomal_uS10_dom"/>
</dbReference>
<dbReference type="InterPro" id="IPR036838">
    <property type="entry name" value="Ribosomal_uS10_dom_sf"/>
</dbReference>
<dbReference type="NCBIfam" id="NF001861">
    <property type="entry name" value="PRK00596.1"/>
    <property type="match status" value="1"/>
</dbReference>
<dbReference type="NCBIfam" id="TIGR01049">
    <property type="entry name" value="rpsJ_bact"/>
    <property type="match status" value="1"/>
</dbReference>
<dbReference type="PANTHER" id="PTHR11700">
    <property type="entry name" value="30S RIBOSOMAL PROTEIN S10 FAMILY MEMBER"/>
    <property type="match status" value="1"/>
</dbReference>
<dbReference type="Pfam" id="PF00338">
    <property type="entry name" value="Ribosomal_S10"/>
    <property type="match status" value="1"/>
</dbReference>
<dbReference type="PRINTS" id="PR00971">
    <property type="entry name" value="RIBOSOMALS10"/>
</dbReference>
<dbReference type="SMART" id="SM01403">
    <property type="entry name" value="Ribosomal_S10"/>
    <property type="match status" value="1"/>
</dbReference>
<dbReference type="SUPFAM" id="SSF54999">
    <property type="entry name" value="Ribosomal protein S10"/>
    <property type="match status" value="1"/>
</dbReference>
<dbReference type="PROSITE" id="PS00361">
    <property type="entry name" value="RIBOSOMAL_S10"/>
    <property type="match status" value="1"/>
</dbReference>
<organism>
    <name type="scientific">Myxococcus xanthus (strain DK1622)</name>
    <dbReference type="NCBI Taxonomy" id="246197"/>
    <lineage>
        <taxon>Bacteria</taxon>
        <taxon>Pseudomonadati</taxon>
        <taxon>Myxococcota</taxon>
        <taxon>Myxococcia</taxon>
        <taxon>Myxococcales</taxon>
        <taxon>Cystobacterineae</taxon>
        <taxon>Myxococcaceae</taxon>
        <taxon>Myxococcus</taxon>
    </lineage>
</organism>
<gene>
    <name evidence="1" type="primary">rpsJ</name>
    <name type="ordered locus">MXAN_3299</name>
</gene>
<reference key="1">
    <citation type="journal article" date="2006" name="Proc. Natl. Acad. Sci. U.S.A.">
        <title>Evolution of sensory complexity recorded in a myxobacterial genome.</title>
        <authorList>
            <person name="Goldman B.S."/>
            <person name="Nierman W.C."/>
            <person name="Kaiser D."/>
            <person name="Slater S.C."/>
            <person name="Durkin A.S."/>
            <person name="Eisen J.A."/>
            <person name="Ronning C.M."/>
            <person name="Barbazuk W.B."/>
            <person name="Blanchard M."/>
            <person name="Field C."/>
            <person name="Halling C."/>
            <person name="Hinkle G."/>
            <person name="Iartchuk O."/>
            <person name="Kim H.S."/>
            <person name="Mackenzie C."/>
            <person name="Madupu R."/>
            <person name="Miller N."/>
            <person name="Shvartsbeyn A."/>
            <person name="Sullivan S.A."/>
            <person name="Vaudin M."/>
            <person name="Wiegand R."/>
            <person name="Kaplan H.B."/>
        </authorList>
    </citation>
    <scope>NUCLEOTIDE SEQUENCE [LARGE SCALE GENOMIC DNA]</scope>
    <source>
        <strain>DK1622</strain>
    </source>
</reference>